<sequence>MSLDLALDVQYATASDYLPSEEQFSLWVKTAIGNSMEQAELTIRIVDARESQMLNSTYRGKDKPTNVLSFPFEAPPEIELPLLGDLVICAAVVENEAREQDKILEAHWAHMVVHGCLHLLGYDHIEDEEAEEMESLETQLIESLGFTDPYKEQ</sequence>
<gene>
    <name evidence="1" type="primary">ybeY</name>
    <name type="ordered locus">Shewmr7_1067</name>
</gene>
<proteinExistence type="inferred from homology"/>
<keyword id="KW-0963">Cytoplasm</keyword>
<keyword id="KW-0255">Endonuclease</keyword>
<keyword id="KW-0378">Hydrolase</keyword>
<keyword id="KW-0479">Metal-binding</keyword>
<keyword id="KW-0540">Nuclease</keyword>
<keyword id="KW-0690">Ribosome biogenesis</keyword>
<keyword id="KW-0698">rRNA processing</keyword>
<keyword id="KW-0862">Zinc</keyword>
<organism>
    <name type="scientific">Shewanella sp. (strain MR-7)</name>
    <dbReference type="NCBI Taxonomy" id="60481"/>
    <lineage>
        <taxon>Bacteria</taxon>
        <taxon>Pseudomonadati</taxon>
        <taxon>Pseudomonadota</taxon>
        <taxon>Gammaproteobacteria</taxon>
        <taxon>Alteromonadales</taxon>
        <taxon>Shewanellaceae</taxon>
        <taxon>Shewanella</taxon>
    </lineage>
</organism>
<name>YBEY_SHESR</name>
<accession>Q0HXT9</accession>
<feature type="chain" id="PRO_0000284308" description="Endoribonuclease YbeY">
    <location>
        <begin position="1"/>
        <end position="153"/>
    </location>
</feature>
<feature type="binding site" evidence="1">
    <location>
        <position position="114"/>
    </location>
    <ligand>
        <name>Zn(2+)</name>
        <dbReference type="ChEBI" id="CHEBI:29105"/>
        <note>catalytic</note>
    </ligand>
</feature>
<feature type="binding site" evidence="1">
    <location>
        <position position="118"/>
    </location>
    <ligand>
        <name>Zn(2+)</name>
        <dbReference type="ChEBI" id="CHEBI:29105"/>
        <note>catalytic</note>
    </ligand>
</feature>
<feature type="binding site" evidence="1">
    <location>
        <position position="124"/>
    </location>
    <ligand>
        <name>Zn(2+)</name>
        <dbReference type="ChEBI" id="CHEBI:29105"/>
        <note>catalytic</note>
    </ligand>
</feature>
<protein>
    <recommendedName>
        <fullName evidence="1">Endoribonuclease YbeY</fullName>
        <ecNumber evidence="1">3.1.-.-</ecNumber>
    </recommendedName>
</protein>
<comment type="function">
    <text evidence="1">Single strand-specific metallo-endoribonuclease involved in late-stage 70S ribosome quality control and in maturation of the 3' terminus of the 16S rRNA.</text>
</comment>
<comment type="cofactor">
    <cofactor evidence="1">
        <name>Zn(2+)</name>
        <dbReference type="ChEBI" id="CHEBI:29105"/>
    </cofactor>
    <text evidence="1">Binds 1 zinc ion.</text>
</comment>
<comment type="subcellular location">
    <subcellularLocation>
        <location evidence="1">Cytoplasm</location>
    </subcellularLocation>
</comment>
<comment type="similarity">
    <text evidence="1">Belongs to the endoribonuclease YbeY family.</text>
</comment>
<dbReference type="EC" id="3.1.-.-" evidence="1"/>
<dbReference type="EMBL" id="CP000444">
    <property type="protein sequence ID" value="ABI42066.1"/>
    <property type="molecule type" value="Genomic_DNA"/>
</dbReference>
<dbReference type="SMR" id="Q0HXT9"/>
<dbReference type="KEGG" id="shm:Shewmr7_1067"/>
<dbReference type="HOGENOM" id="CLU_106710_0_1_6"/>
<dbReference type="GO" id="GO:0005737">
    <property type="term" value="C:cytoplasm"/>
    <property type="evidence" value="ECO:0007669"/>
    <property type="project" value="UniProtKB-SubCell"/>
</dbReference>
<dbReference type="GO" id="GO:0004222">
    <property type="term" value="F:metalloendopeptidase activity"/>
    <property type="evidence" value="ECO:0007669"/>
    <property type="project" value="InterPro"/>
</dbReference>
<dbReference type="GO" id="GO:0004521">
    <property type="term" value="F:RNA endonuclease activity"/>
    <property type="evidence" value="ECO:0007669"/>
    <property type="project" value="UniProtKB-UniRule"/>
</dbReference>
<dbReference type="GO" id="GO:0008270">
    <property type="term" value="F:zinc ion binding"/>
    <property type="evidence" value="ECO:0007669"/>
    <property type="project" value="UniProtKB-UniRule"/>
</dbReference>
<dbReference type="GO" id="GO:0006364">
    <property type="term" value="P:rRNA processing"/>
    <property type="evidence" value="ECO:0007669"/>
    <property type="project" value="UniProtKB-UniRule"/>
</dbReference>
<dbReference type="Gene3D" id="3.40.390.30">
    <property type="entry name" value="Metalloproteases ('zincins'), catalytic domain"/>
    <property type="match status" value="1"/>
</dbReference>
<dbReference type="HAMAP" id="MF_00009">
    <property type="entry name" value="Endoribonucl_YbeY"/>
    <property type="match status" value="1"/>
</dbReference>
<dbReference type="InterPro" id="IPR023091">
    <property type="entry name" value="MetalPrtase_cat_dom_sf_prd"/>
</dbReference>
<dbReference type="InterPro" id="IPR002036">
    <property type="entry name" value="YbeY"/>
</dbReference>
<dbReference type="InterPro" id="IPR020549">
    <property type="entry name" value="YbeY_CS"/>
</dbReference>
<dbReference type="NCBIfam" id="TIGR00043">
    <property type="entry name" value="rRNA maturation RNase YbeY"/>
    <property type="match status" value="1"/>
</dbReference>
<dbReference type="PANTHER" id="PTHR46986">
    <property type="entry name" value="ENDORIBONUCLEASE YBEY, CHLOROPLASTIC"/>
    <property type="match status" value="1"/>
</dbReference>
<dbReference type="PANTHER" id="PTHR46986:SF1">
    <property type="entry name" value="ENDORIBONUCLEASE YBEY, CHLOROPLASTIC"/>
    <property type="match status" value="1"/>
</dbReference>
<dbReference type="Pfam" id="PF02130">
    <property type="entry name" value="YbeY"/>
    <property type="match status" value="1"/>
</dbReference>
<dbReference type="SUPFAM" id="SSF55486">
    <property type="entry name" value="Metalloproteases ('zincins'), catalytic domain"/>
    <property type="match status" value="1"/>
</dbReference>
<dbReference type="PROSITE" id="PS01306">
    <property type="entry name" value="UPF0054"/>
    <property type="match status" value="1"/>
</dbReference>
<evidence type="ECO:0000255" key="1">
    <source>
        <dbReference type="HAMAP-Rule" id="MF_00009"/>
    </source>
</evidence>
<reference key="1">
    <citation type="submission" date="2006-08" db="EMBL/GenBank/DDBJ databases">
        <title>Complete sequence of chromosome 1 of Shewanella sp. MR-7.</title>
        <authorList>
            <person name="Copeland A."/>
            <person name="Lucas S."/>
            <person name="Lapidus A."/>
            <person name="Barry K."/>
            <person name="Detter J.C."/>
            <person name="Glavina del Rio T."/>
            <person name="Hammon N."/>
            <person name="Israni S."/>
            <person name="Dalin E."/>
            <person name="Tice H."/>
            <person name="Pitluck S."/>
            <person name="Kiss H."/>
            <person name="Brettin T."/>
            <person name="Bruce D."/>
            <person name="Han C."/>
            <person name="Tapia R."/>
            <person name="Gilna P."/>
            <person name="Schmutz J."/>
            <person name="Larimer F."/>
            <person name="Land M."/>
            <person name="Hauser L."/>
            <person name="Kyrpides N."/>
            <person name="Mikhailova N."/>
            <person name="Nealson K."/>
            <person name="Konstantinidis K."/>
            <person name="Klappenbach J."/>
            <person name="Tiedje J."/>
            <person name="Richardson P."/>
        </authorList>
    </citation>
    <scope>NUCLEOTIDE SEQUENCE [LARGE SCALE GENOMIC DNA]</scope>
    <source>
        <strain>MR-7</strain>
    </source>
</reference>